<proteinExistence type="inferred from homology"/>
<organism>
    <name type="scientific">Bifidobacterium animalis subsp. lactis (strain AD011)</name>
    <dbReference type="NCBI Taxonomy" id="442563"/>
    <lineage>
        <taxon>Bacteria</taxon>
        <taxon>Bacillati</taxon>
        <taxon>Actinomycetota</taxon>
        <taxon>Actinomycetes</taxon>
        <taxon>Bifidobacteriales</taxon>
        <taxon>Bifidobacteriaceae</taxon>
        <taxon>Bifidobacterium</taxon>
    </lineage>
</organism>
<comment type="function">
    <text evidence="1">Hydrolyzes ribosome-free peptidyl-tRNAs (with 1 or more amino acids incorporated), which drop off the ribosome during protein synthesis, or as a result of ribosome stalling.</text>
</comment>
<comment type="function">
    <text evidence="1">Catalyzes the release of premature peptidyl moieties from peptidyl-tRNA molecules trapped in stalled 50S ribosomal subunits, and thus maintains levels of free tRNAs and 50S ribosomes.</text>
</comment>
<comment type="catalytic activity">
    <reaction evidence="1">
        <text>an N-acyl-L-alpha-aminoacyl-tRNA + H2O = an N-acyl-L-amino acid + a tRNA + H(+)</text>
        <dbReference type="Rhea" id="RHEA:54448"/>
        <dbReference type="Rhea" id="RHEA-COMP:10123"/>
        <dbReference type="Rhea" id="RHEA-COMP:13883"/>
        <dbReference type="ChEBI" id="CHEBI:15377"/>
        <dbReference type="ChEBI" id="CHEBI:15378"/>
        <dbReference type="ChEBI" id="CHEBI:59874"/>
        <dbReference type="ChEBI" id="CHEBI:78442"/>
        <dbReference type="ChEBI" id="CHEBI:138191"/>
        <dbReference type="EC" id="3.1.1.29"/>
    </reaction>
</comment>
<comment type="subunit">
    <text evidence="1">Monomer.</text>
</comment>
<comment type="subcellular location">
    <subcellularLocation>
        <location evidence="1">Cytoplasm</location>
    </subcellularLocation>
</comment>
<comment type="similarity">
    <text evidence="1">Belongs to the PTH family.</text>
</comment>
<keyword id="KW-0963">Cytoplasm</keyword>
<keyword id="KW-0378">Hydrolase</keyword>
<keyword id="KW-1185">Reference proteome</keyword>
<keyword id="KW-0694">RNA-binding</keyword>
<keyword id="KW-0820">tRNA-binding</keyword>
<evidence type="ECO:0000255" key="1">
    <source>
        <dbReference type="HAMAP-Rule" id="MF_00083"/>
    </source>
</evidence>
<name>PTH_BIFA0</name>
<feature type="chain" id="PRO_1000192959" description="Peptidyl-tRNA hydrolase">
    <location>
        <begin position="1"/>
        <end position="199"/>
    </location>
</feature>
<feature type="active site" description="Proton acceptor" evidence="1">
    <location>
        <position position="23"/>
    </location>
</feature>
<feature type="binding site" evidence="1">
    <location>
        <position position="18"/>
    </location>
    <ligand>
        <name>tRNA</name>
        <dbReference type="ChEBI" id="CHEBI:17843"/>
    </ligand>
</feature>
<feature type="binding site" evidence="1">
    <location>
        <position position="72"/>
    </location>
    <ligand>
        <name>tRNA</name>
        <dbReference type="ChEBI" id="CHEBI:17843"/>
    </ligand>
</feature>
<feature type="binding site" evidence="1">
    <location>
        <position position="74"/>
    </location>
    <ligand>
        <name>tRNA</name>
        <dbReference type="ChEBI" id="CHEBI:17843"/>
    </ligand>
</feature>
<feature type="binding site" evidence="1">
    <location>
        <position position="120"/>
    </location>
    <ligand>
        <name>tRNA</name>
        <dbReference type="ChEBI" id="CHEBI:17843"/>
    </ligand>
</feature>
<feature type="site" description="Discriminates between blocked and unblocked aminoacyl-tRNA" evidence="1">
    <location>
        <position position="13"/>
    </location>
</feature>
<feature type="site" description="Stabilizes the basic form of H active site to accept a proton" evidence="1">
    <location>
        <position position="99"/>
    </location>
</feature>
<accession>B8DTI5</accession>
<dbReference type="EC" id="3.1.1.29" evidence="1"/>
<dbReference type="EMBL" id="CP001213">
    <property type="protein sequence ID" value="ACL29314.1"/>
    <property type="molecule type" value="Genomic_DNA"/>
</dbReference>
<dbReference type="RefSeq" id="WP_004217710.1">
    <property type="nucleotide sequence ID" value="NC_011835.1"/>
</dbReference>
<dbReference type="SMR" id="B8DTI5"/>
<dbReference type="STRING" id="442563.BLA_1024"/>
<dbReference type="GeneID" id="29696293"/>
<dbReference type="KEGG" id="bla:BLA_1024"/>
<dbReference type="PATRIC" id="fig|442563.4.peg.1070"/>
<dbReference type="HOGENOM" id="CLU_062456_3_1_11"/>
<dbReference type="Proteomes" id="UP000002456">
    <property type="component" value="Chromosome"/>
</dbReference>
<dbReference type="GO" id="GO:0005737">
    <property type="term" value="C:cytoplasm"/>
    <property type="evidence" value="ECO:0007669"/>
    <property type="project" value="UniProtKB-SubCell"/>
</dbReference>
<dbReference type="GO" id="GO:0004045">
    <property type="term" value="F:peptidyl-tRNA hydrolase activity"/>
    <property type="evidence" value="ECO:0007669"/>
    <property type="project" value="UniProtKB-UniRule"/>
</dbReference>
<dbReference type="GO" id="GO:0000049">
    <property type="term" value="F:tRNA binding"/>
    <property type="evidence" value="ECO:0007669"/>
    <property type="project" value="UniProtKB-UniRule"/>
</dbReference>
<dbReference type="GO" id="GO:0006515">
    <property type="term" value="P:protein quality control for misfolded or incompletely synthesized proteins"/>
    <property type="evidence" value="ECO:0007669"/>
    <property type="project" value="UniProtKB-UniRule"/>
</dbReference>
<dbReference type="GO" id="GO:0072344">
    <property type="term" value="P:rescue of stalled ribosome"/>
    <property type="evidence" value="ECO:0007669"/>
    <property type="project" value="UniProtKB-UniRule"/>
</dbReference>
<dbReference type="CDD" id="cd00462">
    <property type="entry name" value="PTH"/>
    <property type="match status" value="1"/>
</dbReference>
<dbReference type="FunFam" id="3.40.50.1470:FF:000001">
    <property type="entry name" value="Peptidyl-tRNA hydrolase"/>
    <property type="match status" value="1"/>
</dbReference>
<dbReference type="Gene3D" id="3.40.50.1470">
    <property type="entry name" value="Peptidyl-tRNA hydrolase"/>
    <property type="match status" value="1"/>
</dbReference>
<dbReference type="HAMAP" id="MF_00083">
    <property type="entry name" value="Pept_tRNA_hydro_bact"/>
    <property type="match status" value="1"/>
</dbReference>
<dbReference type="InterPro" id="IPR001328">
    <property type="entry name" value="Pept_tRNA_hydro"/>
</dbReference>
<dbReference type="InterPro" id="IPR018171">
    <property type="entry name" value="Pept_tRNA_hydro_CS"/>
</dbReference>
<dbReference type="InterPro" id="IPR036416">
    <property type="entry name" value="Pept_tRNA_hydro_sf"/>
</dbReference>
<dbReference type="NCBIfam" id="TIGR00447">
    <property type="entry name" value="pth"/>
    <property type="match status" value="1"/>
</dbReference>
<dbReference type="PANTHER" id="PTHR17224">
    <property type="entry name" value="PEPTIDYL-TRNA HYDROLASE"/>
    <property type="match status" value="1"/>
</dbReference>
<dbReference type="PANTHER" id="PTHR17224:SF1">
    <property type="entry name" value="PEPTIDYL-TRNA HYDROLASE"/>
    <property type="match status" value="1"/>
</dbReference>
<dbReference type="Pfam" id="PF01195">
    <property type="entry name" value="Pept_tRNA_hydro"/>
    <property type="match status" value="1"/>
</dbReference>
<dbReference type="SUPFAM" id="SSF53178">
    <property type="entry name" value="Peptidyl-tRNA hydrolase-like"/>
    <property type="match status" value="1"/>
</dbReference>
<dbReference type="PROSITE" id="PS01195">
    <property type="entry name" value="PEPT_TRNA_HYDROL_1"/>
    <property type="match status" value="1"/>
</dbReference>
<dbReference type="PROSITE" id="PS01196">
    <property type="entry name" value="PEPT_TRNA_HYDROL_2"/>
    <property type="match status" value="1"/>
</dbReference>
<reference key="1">
    <citation type="journal article" date="2009" name="J. Bacteriol.">
        <title>Genome sequence of the probiotic bacterium Bifidobacterium animalis subsp. lactis AD011.</title>
        <authorList>
            <person name="Kim J.F."/>
            <person name="Jeong H."/>
            <person name="Yu D.S."/>
            <person name="Choi S.-H."/>
            <person name="Hur C.-G."/>
            <person name="Park M.-S."/>
            <person name="Yoon S.H."/>
            <person name="Kim D.-W."/>
            <person name="Ji G.E."/>
            <person name="Park H.-S."/>
            <person name="Oh T.K."/>
        </authorList>
    </citation>
    <scope>NUCLEOTIDE SEQUENCE [LARGE SCALE GENOMIC DNA]</scope>
    <source>
        <strain>AD011</strain>
    </source>
</reference>
<gene>
    <name evidence="1" type="primary">pth</name>
    <name type="ordered locus">BLA_1024</name>
</gene>
<protein>
    <recommendedName>
        <fullName evidence="1">Peptidyl-tRNA hydrolase</fullName>
        <shortName evidence="1">Pth</shortName>
        <ecNumber evidence="1">3.1.1.29</ecNumber>
    </recommendedName>
</protein>
<sequence length="199" mass="22001">MASEFWLIVGLGNPGAKYRNTRHNMGFMTVNELAKRWSIHFANHKGLADLGKGTMSLNGQTAKVFLCKPLTYMNDSGQAVQSIREYYHINLDHIVVIHDDMDLEFGRIKLKSGGSAGGHNGIKSIDRCLHSPDYARVRMGVGHASRSGDAHDNTINWVLGEFNAAQRKQLPEFLADGADAAETIVFEGLTKAQDKFNAR</sequence>